<comment type="function">
    <text evidence="1">May bind long-chain fatty acids, such as palmitate, and may play a role in lipid transport or fatty acid metabolism.</text>
</comment>
<dbReference type="EMBL" id="AE014074">
    <property type="protein sequence ID" value="AAM80085.1"/>
    <property type="molecule type" value="Genomic_DNA"/>
</dbReference>
<dbReference type="RefSeq" id="WP_002988852.1">
    <property type="nucleotide sequence ID" value="NC_004070.1"/>
</dbReference>
<dbReference type="SMR" id="P0DA56"/>
<dbReference type="KEGG" id="spg:SpyM3_1478"/>
<dbReference type="HOGENOM" id="CLU_048251_2_0_9"/>
<dbReference type="Proteomes" id="UP000000564">
    <property type="component" value="Chromosome"/>
</dbReference>
<dbReference type="GO" id="GO:0008289">
    <property type="term" value="F:lipid binding"/>
    <property type="evidence" value="ECO:0007669"/>
    <property type="project" value="UniProtKB-KW"/>
</dbReference>
<dbReference type="Gene3D" id="3.30.1180.10">
    <property type="match status" value="1"/>
</dbReference>
<dbReference type="Gene3D" id="2.20.28.50">
    <property type="entry name" value="degv family protein"/>
    <property type="match status" value="1"/>
</dbReference>
<dbReference type="Gene3D" id="3.40.50.10440">
    <property type="entry name" value="Dihydroxyacetone kinase, domain 1"/>
    <property type="match status" value="1"/>
</dbReference>
<dbReference type="InterPro" id="IPR003797">
    <property type="entry name" value="DegV"/>
</dbReference>
<dbReference type="InterPro" id="IPR043168">
    <property type="entry name" value="DegV_C"/>
</dbReference>
<dbReference type="InterPro" id="IPR050270">
    <property type="entry name" value="DegV_domain_contain"/>
</dbReference>
<dbReference type="NCBIfam" id="TIGR00762">
    <property type="entry name" value="DegV"/>
    <property type="match status" value="1"/>
</dbReference>
<dbReference type="PANTHER" id="PTHR33434">
    <property type="entry name" value="DEGV DOMAIN-CONTAINING PROTEIN DR_1986-RELATED"/>
    <property type="match status" value="1"/>
</dbReference>
<dbReference type="PANTHER" id="PTHR33434:SF2">
    <property type="entry name" value="FATTY ACID-BINDING PROTEIN TM_1468"/>
    <property type="match status" value="1"/>
</dbReference>
<dbReference type="Pfam" id="PF02645">
    <property type="entry name" value="DegV"/>
    <property type="match status" value="1"/>
</dbReference>
<dbReference type="SUPFAM" id="SSF82549">
    <property type="entry name" value="DAK1/DegV-like"/>
    <property type="match status" value="1"/>
</dbReference>
<dbReference type="PROSITE" id="PS51482">
    <property type="entry name" value="DEGV"/>
    <property type="match status" value="1"/>
</dbReference>
<reference key="1">
    <citation type="journal article" date="2002" name="Proc. Natl. Acad. Sci. U.S.A.">
        <title>Genome sequence of a serotype M3 strain of group A Streptococcus: phage-encoded toxins, the high-virulence phenotype, and clone emergence.</title>
        <authorList>
            <person name="Beres S.B."/>
            <person name="Sylva G.L."/>
            <person name="Barbian K.D."/>
            <person name="Lei B."/>
            <person name="Hoff J.S."/>
            <person name="Mammarella N.D."/>
            <person name="Liu M.-Y."/>
            <person name="Smoot J.C."/>
            <person name="Porcella S.F."/>
            <person name="Parkins L.D."/>
            <person name="Campbell D.S."/>
            <person name="Smith T.M."/>
            <person name="McCormick J.K."/>
            <person name="Leung D.Y.M."/>
            <person name="Schlievert P.M."/>
            <person name="Musser J.M."/>
        </authorList>
    </citation>
    <scope>NUCLEOTIDE SEQUENCE [LARGE SCALE GENOMIC DNA]</scope>
    <source>
        <strain>ATCC BAA-595 / MGAS315</strain>
    </source>
</reference>
<name>Y1478_STRP3</name>
<organism>
    <name type="scientific">Streptococcus pyogenes serotype M3 (strain ATCC BAA-595 / MGAS315)</name>
    <dbReference type="NCBI Taxonomy" id="198466"/>
    <lineage>
        <taxon>Bacteria</taxon>
        <taxon>Bacillati</taxon>
        <taxon>Bacillota</taxon>
        <taxon>Bacilli</taxon>
        <taxon>Lactobacillales</taxon>
        <taxon>Streptococcaceae</taxon>
        <taxon>Streptococcus</taxon>
    </lineage>
</organism>
<evidence type="ECO:0000250" key="1"/>
<evidence type="ECO:0000250" key="2">
    <source>
        <dbReference type="UniProtKB" id="Q9X1H9"/>
    </source>
</evidence>
<evidence type="ECO:0000255" key="3">
    <source>
        <dbReference type="PROSITE-ProRule" id="PRU00815"/>
    </source>
</evidence>
<feature type="chain" id="PRO_0000209809" description="DegV domain-containing protein SpyM3_1478">
    <location>
        <begin position="1"/>
        <end position="280"/>
    </location>
</feature>
<feature type="domain" description="DegV" evidence="3">
    <location>
        <begin position="3"/>
        <end position="280"/>
    </location>
</feature>
<feature type="binding site" evidence="2">
    <location>
        <position position="63"/>
    </location>
    <ligand>
        <name>hexadecanoate</name>
        <dbReference type="ChEBI" id="CHEBI:7896"/>
    </ligand>
</feature>
<feature type="binding site" evidence="2">
    <location>
        <position position="91"/>
    </location>
    <ligand>
        <name>hexadecanoate</name>
        <dbReference type="ChEBI" id="CHEBI:7896"/>
    </ligand>
</feature>
<protein>
    <recommendedName>
        <fullName>DegV domain-containing protein SpyM3_1478</fullName>
    </recommendedName>
</protein>
<proteinExistence type="inferred from homology"/>
<sequence>MTWKIVTDSGCDLRSLTRQSKELRFERVPLTLQIGTEIFRDDDGLDIDNMMTTMYQSSKATTSSCPSPEAFLQAYRGADNVIVMTITGTLSGSHNSARLAKNELLEENPNVNIHLIDSLSAGGEMDLLVLELERLINLGLSFEEVVKQITAYQQKTRLIFVLAKVDNLVKNGRLSKLVGKVIGLLNIRMVGKASNKGTLELLQKARGQKKAVSALIEEIQKEGYVGGKVYIAHAQNPKICEQISEKIKSLYPDAVIQTGRTSGLCSFYAEDGGLLMGYEI</sequence>
<accession>P0DA56</accession>
<accession>Q8K657</accession>
<keyword id="KW-0446">Lipid-binding</keyword>
<gene>
    <name type="ordered locus">SpyM3_1478</name>
</gene>